<organism>
    <name type="scientific">Homo sapiens</name>
    <name type="common">Human</name>
    <dbReference type="NCBI Taxonomy" id="9606"/>
    <lineage>
        <taxon>Eukaryota</taxon>
        <taxon>Metazoa</taxon>
        <taxon>Chordata</taxon>
        <taxon>Craniata</taxon>
        <taxon>Vertebrata</taxon>
        <taxon>Euteleostomi</taxon>
        <taxon>Mammalia</taxon>
        <taxon>Eutheria</taxon>
        <taxon>Euarchontoglires</taxon>
        <taxon>Primates</taxon>
        <taxon>Haplorrhini</taxon>
        <taxon>Catarrhini</taxon>
        <taxon>Hominidae</taxon>
        <taxon>Homo</taxon>
    </lineage>
</organism>
<evidence type="ECO:0000256" key="1">
    <source>
        <dbReference type="SAM" id="MobiDB-lite"/>
    </source>
</evidence>
<evidence type="ECO:0000305" key="2"/>
<sequence length="631" mass="71191">MSHQEGSTDGLPDLGTESLFSSPEEQSGAVAATEASSDIDIATSELSVTVTGDGSDSRDGGFPNDASTENRSSDQESASEDIELESLEDFEHFLMSGESLFHYPLVGEEETEREEEDEEIQEEGGEEEEEEEEEEEEEEEEEEEEEEQPRAGPQGSGGNHEQYSLEEDQALEEWVSSETSALPRPRWQVVTALHQRQLGSRPRFVYEACGARAFVQRFRLQYRLADHVGCVNTVHFNQRGTRLASSGDDLKVIVWDWVRQRPVLNFESGHTNNVFQAKFLPNCGDSTLAMCARDGQVRVAELINASYFNNTKCVAQHRGPAHKLALEPDSPYKFLTSGEDAVVFTIDLRQDRPASKVVVTRENDKKVGLYTITVNPANTYQFAVGGQDQFVRIYDQRKIDKKENNGVLKKFTPHHLVNCDFPTNITCVVYSHDGTELLASYNDDDIYLFNSSHSDGAQYSKRFKGHRNNTTVKGVNFYGPRSEFVVSGSDCGHIFFWEKSSCQIIQFLKGSREGTINCLEPHPYLPVLACSGLDHDVKIWTPTAKAATELTGLKKVIKKNKWERDEDSLHHGSLFDQYMLWFLLRHVTQRGRHQDWRSGEAEFPDEESDESSSTSETSEEEVQDRVQCMPS</sequence>
<feature type="chain" id="PRO_0000344462" description="DDB1- and CUL4-associated factor 8-like protein 2">
    <location>
        <begin position="1"/>
        <end position="631"/>
    </location>
</feature>
<feature type="repeat" description="WD 1">
    <location>
        <begin position="226"/>
        <end position="265"/>
    </location>
</feature>
<feature type="repeat" description="WD 2">
    <location>
        <begin position="269"/>
        <end position="310"/>
    </location>
</feature>
<feature type="repeat" description="WD 3">
    <location>
        <begin position="316"/>
        <end position="356"/>
    </location>
</feature>
<feature type="repeat" description="WD 4">
    <location>
        <begin position="364"/>
        <end position="404"/>
    </location>
</feature>
<feature type="repeat" description="WD 5">
    <location>
        <begin position="420"/>
        <end position="459"/>
    </location>
</feature>
<feature type="repeat" description="WD 6">
    <location>
        <begin position="467"/>
        <end position="507"/>
    </location>
</feature>
<feature type="repeat" description="WD 7">
    <location>
        <begin position="511"/>
        <end position="550"/>
    </location>
</feature>
<feature type="region of interest" description="Disordered" evidence="1">
    <location>
        <begin position="1"/>
        <end position="91"/>
    </location>
</feature>
<feature type="region of interest" description="Disordered" evidence="1">
    <location>
        <begin position="108"/>
        <end position="163"/>
    </location>
</feature>
<feature type="region of interest" description="Disordered" evidence="1">
    <location>
        <begin position="594"/>
        <end position="631"/>
    </location>
</feature>
<feature type="compositionally biased region" description="Polar residues" evidence="1">
    <location>
        <begin position="44"/>
        <end position="54"/>
    </location>
</feature>
<feature type="compositionally biased region" description="Acidic residues" evidence="1">
    <location>
        <begin position="77"/>
        <end position="88"/>
    </location>
</feature>
<feature type="compositionally biased region" description="Acidic residues" evidence="1">
    <location>
        <begin position="108"/>
        <end position="147"/>
    </location>
</feature>
<feature type="sequence variant" id="VAR_045620" description="In dbSNP:rs5926895.">
    <original>T</original>
    <variation>A</variation>
    <location>
        <position position="345"/>
    </location>
</feature>
<feature type="sequence conflict" description="In Ref. 1; AAI57860." evidence="2" ref="1">
    <location>
        <begin position="145"/>
        <end position="147"/>
    </location>
</feature>
<name>DC8L2_HUMAN</name>
<reference key="1">
    <citation type="journal article" date="2004" name="Genome Res.">
        <title>The status, quality, and expansion of the NIH full-length cDNA project: the Mammalian Gene Collection (MGC).</title>
        <authorList>
            <consortium name="The MGC Project Team"/>
        </authorList>
    </citation>
    <scope>NUCLEOTIDE SEQUENCE [LARGE SCALE MRNA]</scope>
</reference>
<reference key="2">
    <citation type="journal article" date="2005" name="Nature">
        <title>The DNA sequence of the human X chromosome.</title>
        <authorList>
            <person name="Ross M.T."/>
            <person name="Grafham D.V."/>
            <person name="Coffey A.J."/>
            <person name="Scherer S."/>
            <person name="McLay K."/>
            <person name="Muzny D."/>
            <person name="Platzer M."/>
            <person name="Howell G.R."/>
            <person name="Burrows C."/>
            <person name="Bird C.P."/>
            <person name="Frankish A."/>
            <person name="Lovell F.L."/>
            <person name="Howe K.L."/>
            <person name="Ashurst J.L."/>
            <person name="Fulton R.S."/>
            <person name="Sudbrak R."/>
            <person name="Wen G."/>
            <person name="Jones M.C."/>
            <person name="Hurles M.E."/>
            <person name="Andrews T.D."/>
            <person name="Scott C.E."/>
            <person name="Searle S."/>
            <person name="Ramser J."/>
            <person name="Whittaker A."/>
            <person name="Deadman R."/>
            <person name="Carter N.P."/>
            <person name="Hunt S.E."/>
            <person name="Chen R."/>
            <person name="Cree A."/>
            <person name="Gunaratne P."/>
            <person name="Havlak P."/>
            <person name="Hodgson A."/>
            <person name="Metzker M.L."/>
            <person name="Richards S."/>
            <person name="Scott G."/>
            <person name="Steffen D."/>
            <person name="Sodergren E."/>
            <person name="Wheeler D.A."/>
            <person name="Worley K.C."/>
            <person name="Ainscough R."/>
            <person name="Ambrose K.D."/>
            <person name="Ansari-Lari M.A."/>
            <person name="Aradhya S."/>
            <person name="Ashwell R.I."/>
            <person name="Babbage A.K."/>
            <person name="Bagguley C.L."/>
            <person name="Ballabio A."/>
            <person name="Banerjee R."/>
            <person name="Barker G.E."/>
            <person name="Barlow K.F."/>
            <person name="Barrett I.P."/>
            <person name="Bates K.N."/>
            <person name="Beare D.M."/>
            <person name="Beasley H."/>
            <person name="Beasley O."/>
            <person name="Beck A."/>
            <person name="Bethel G."/>
            <person name="Blechschmidt K."/>
            <person name="Brady N."/>
            <person name="Bray-Allen S."/>
            <person name="Bridgeman A.M."/>
            <person name="Brown A.J."/>
            <person name="Brown M.J."/>
            <person name="Bonnin D."/>
            <person name="Bruford E.A."/>
            <person name="Buhay C."/>
            <person name="Burch P."/>
            <person name="Burford D."/>
            <person name="Burgess J."/>
            <person name="Burrill W."/>
            <person name="Burton J."/>
            <person name="Bye J.M."/>
            <person name="Carder C."/>
            <person name="Carrel L."/>
            <person name="Chako J."/>
            <person name="Chapman J.C."/>
            <person name="Chavez D."/>
            <person name="Chen E."/>
            <person name="Chen G."/>
            <person name="Chen Y."/>
            <person name="Chen Z."/>
            <person name="Chinault C."/>
            <person name="Ciccodicola A."/>
            <person name="Clark S.Y."/>
            <person name="Clarke G."/>
            <person name="Clee C.M."/>
            <person name="Clegg S."/>
            <person name="Clerc-Blankenburg K."/>
            <person name="Clifford K."/>
            <person name="Cobley V."/>
            <person name="Cole C.G."/>
            <person name="Conquer J.S."/>
            <person name="Corby N."/>
            <person name="Connor R.E."/>
            <person name="David R."/>
            <person name="Davies J."/>
            <person name="Davis C."/>
            <person name="Davis J."/>
            <person name="Delgado O."/>
            <person name="Deshazo D."/>
            <person name="Dhami P."/>
            <person name="Ding Y."/>
            <person name="Dinh H."/>
            <person name="Dodsworth S."/>
            <person name="Draper H."/>
            <person name="Dugan-Rocha S."/>
            <person name="Dunham A."/>
            <person name="Dunn M."/>
            <person name="Durbin K.J."/>
            <person name="Dutta I."/>
            <person name="Eades T."/>
            <person name="Ellwood M."/>
            <person name="Emery-Cohen A."/>
            <person name="Errington H."/>
            <person name="Evans K.L."/>
            <person name="Faulkner L."/>
            <person name="Francis F."/>
            <person name="Frankland J."/>
            <person name="Fraser A.E."/>
            <person name="Galgoczy P."/>
            <person name="Gilbert J."/>
            <person name="Gill R."/>
            <person name="Gloeckner G."/>
            <person name="Gregory S.G."/>
            <person name="Gribble S."/>
            <person name="Griffiths C."/>
            <person name="Grocock R."/>
            <person name="Gu Y."/>
            <person name="Gwilliam R."/>
            <person name="Hamilton C."/>
            <person name="Hart E.A."/>
            <person name="Hawes A."/>
            <person name="Heath P.D."/>
            <person name="Heitmann K."/>
            <person name="Hennig S."/>
            <person name="Hernandez J."/>
            <person name="Hinzmann B."/>
            <person name="Ho S."/>
            <person name="Hoffs M."/>
            <person name="Howden P.J."/>
            <person name="Huckle E.J."/>
            <person name="Hume J."/>
            <person name="Hunt P.J."/>
            <person name="Hunt A.R."/>
            <person name="Isherwood J."/>
            <person name="Jacob L."/>
            <person name="Johnson D."/>
            <person name="Jones S."/>
            <person name="de Jong P.J."/>
            <person name="Joseph S.S."/>
            <person name="Keenan S."/>
            <person name="Kelly S."/>
            <person name="Kershaw J.K."/>
            <person name="Khan Z."/>
            <person name="Kioschis P."/>
            <person name="Klages S."/>
            <person name="Knights A.J."/>
            <person name="Kosiura A."/>
            <person name="Kovar-Smith C."/>
            <person name="Laird G.K."/>
            <person name="Langford C."/>
            <person name="Lawlor S."/>
            <person name="Leversha M."/>
            <person name="Lewis L."/>
            <person name="Liu W."/>
            <person name="Lloyd C."/>
            <person name="Lloyd D.M."/>
            <person name="Loulseged H."/>
            <person name="Loveland J.E."/>
            <person name="Lovell J.D."/>
            <person name="Lozado R."/>
            <person name="Lu J."/>
            <person name="Lyne R."/>
            <person name="Ma J."/>
            <person name="Maheshwari M."/>
            <person name="Matthews L.H."/>
            <person name="McDowall J."/>
            <person name="McLaren S."/>
            <person name="McMurray A."/>
            <person name="Meidl P."/>
            <person name="Meitinger T."/>
            <person name="Milne S."/>
            <person name="Miner G."/>
            <person name="Mistry S.L."/>
            <person name="Morgan M."/>
            <person name="Morris S."/>
            <person name="Mueller I."/>
            <person name="Mullikin J.C."/>
            <person name="Nguyen N."/>
            <person name="Nordsiek G."/>
            <person name="Nyakatura G."/>
            <person name="O'dell C.N."/>
            <person name="Okwuonu G."/>
            <person name="Palmer S."/>
            <person name="Pandian R."/>
            <person name="Parker D."/>
            <person name="Parrish J."/>
            <person name="Pasternak S."/>
            <person name="Patel D."/>
            <person name="Pearce A.V."/>
            <person name="Pearson D.M."/>
            <person name="Pelan S.E."/>
            <person name="Perez L."/>
            <person name="Porter K.M."/>
            <person name="Ramsey Y."/>
            <person name="Reichwald K."/>
            <person name="Rhodes S."/>
            <person name="Ridler K.A."/>
            <person name="Schlessinger D."/>
            <person name="Schueler M.G."/>
            <person name="Sehra H.K."/>
            <person name="Shaw-Smith C."/>
            <person name="Shen H."/>
            <person name="Sheridan E.M."/>
            <person name="Shownkeen R."/>
            <person name="Skuce C.D."/>
            <person name="Smith M.L."/>
            <person name="Sotheran E.C."/>
            <person name="Steingruber H.E."/>
            <person name="Steward C.A."/>
            <person name="Storey R."/>
            <person name="Swann R.M."/>
            <person name="Swarbreck D."/>
            <person name="Tabor P.E."/>
            <person name="Taudien S."/>
            <person name="Taylor T."/>
            <person name="Teague B."/>
            <person name="Thomas K."/>
            <person name="Thorpe A."/>
            <person name="Timms K."/>
            <person name="Tracey A."/>
            <person name="Trevanion S."/>
            <person name="Tromans A.C."/>
            <person name="d'Urso M."/>
            <person name="Verduzco D."/>
            <person name="Villasana D."/>
            <person name="Waldron L."/>
            <person name="Wall M."/>
            <person name="Wang Q."/>
            <person name="Warren J."/>
            <person name="Warry G.L."/>
            <person name="Wei X."/>
            <person name="West A."/>
            <person name="Whitehead S.L."/>
            <person name="Whiteley M.N."/>
            <person name="Wilkinson J.E."/>
            <person name="Willey D.L."/>
            <person name="Williams G."/>
            <person name="Williams L."/>
            <person name="Williamson A."/>
            <person name="Williamson H."/>
            <person name="Wilming L."/>
            <person name="Woodmansey R.L."/>
            <person name="Wray P.W."/>
            <person name="Yen J."/>
            <person name="Zhang J."/>
            <person name="Zhou J."/>
            <person name="Zoghbi H."/>
            <person name="Zorilla S."/>
            <person name="Buck D."/>
            <person name="Reinhardt R."/>
            <person name="Poustka A."/>
            <person name="Rosenthal A."/>
            <person name="Lehrach H."/>
            <person name="Meindl A."/>
            <person name="Minx P.J."/>
            <person name="Hillier L.W."/>
            <person name="Willard H.F."/>
            <person name="Wilson R.K."/>
            <person name="Waterston R.H."/>
            <person name="Rice C.M."/>
            <person name="Vaudin M."/>
            <person name="Coulson A."/>
            <person name="Nelson D.L."/>
            <person name="Weinstock G."/>
            <person name="Sulston J.E."/>
            <person name="Durbin R.M."/>
            <person name="Hubbard T."/>
            <person name="Gibbs R.A."/>
            <person name="Beck S."/>
            <person name="Rogers J."/>
            <person name="Bentley D.R."/>
        </authorList>
    </citation>
    <scope>NUCLEOTIDE SEQUENCE [LARGE SCALE GENOMIC DNA]</scope>
</reference>
<keyword id="KW-1267">Proteomics identification</keyword>
<keyword id="KW-1185">Reference proteome</keyword>
<keyword id="KW-0677">Repeat</keyword>
<keyword id="KW-0853">WD repeat</keyword>
<comment type="similarity">
    <text evidence="2">Belongs to the WD repeat DCAF8 family.</text>
</comment>
<accession>P0C7V8</accession>
<accession>B2RXH9</accession>
<accession>J3KT06</accession>
<protein>
    <recommendedName>
        <fullName>DDB1- and CUL4-associated factor 8-like protein 2</fullName>
    </recommendedName>
    <alternativeName>
        <fullName>WD repeat-containing protein 42C</fullName>
    </alternativeName>
</protein>
<gene>
    <name type="primary">DCAF8L2</name>
    <name type="synonym">WDR42C</name>
</gene>
<dbReference type="EMBL" id="BC157859">
    <property type="protein sequence ID" value="AAI57860.1"/>
    <property type="molecule type" value="mRNA"/>
</dbReference>
<dbReference type="EMBL" id="AC006210">
    <property type="status" value="NOT_ANNOTATED_CDS"/>
    <property type="molecule type" value="Genomic_DNA"/>
</dbReference>
<dbReference type="EMBL" id="AC079902">
    <property type="status" value="NOT_ANNOTATED_CDS"/>
    <property type="molecule type" value="Genomic_DNA"/>
</dbReference>
<dbReference type="EMBL" id="AC107613">
    <property type="status" value="NOT_ANNOTATED_CDS"/>
    <property type="molecule type" value="Genomic_DNA"/>
</dbReference>
<dbReference type="CCDS" id="CCDS59162.1"/>
<dbReference type="RefSeq" id="NP_001130005.1">
    <property type="nucleotide sequence ID" value="NM_001136533.1"/>
</dbReference>
<dbReference type="RefSeq" id="NP_001340377.1">
    <property type="nucleotide sequence ID" value="NM_001353448.2"/>
</dbReference>
<dbReference type="RefSeq" id="NP_001340378.1">
    <property type="nucleotide sequence ID" value="NM_001353449.2"/>
</dbReference>
<dbReference type="RefSeq" id="NP_001340379.1">
    <property type="nucleotide sequence ID" value="NM_001353450.2"/>
</dbReference>
<dbReference type="RefSeq" id="XP_024308139.1">
    <property type="nucleotide sequence ID" value="XM_024452371.2"/>
</dbReference>
<dbReference type="RefSeq" id="XP_024308140.1">
    <property type="nucleotide sequence ID" value="XM_024452372.2"/>
</dbReference>
<dbReference type="RefSeq" id="XP_024308141.1">
    <property type="nucleotide sequence ID" value="XM_024452373.2"/>
</dbReference>
<dbReference type="RefSeq" id="XP_024308142.1">
    <property type="nucleotide sequence ID" value="XM_024452374.2"/>
</dbReference>
<dbReference type="RefSeq" id="XP_024308144.1">
    <property type="nucleotide sequence ID" value="XM_024452376.2"/>
</dbReference>
<dbReference type="RefSeq" id="XP_024308145.1">
    <property type="nucleotide sequence ID" value="XM_024452377.2"/>
</dbReference>
<dbReference type="SMR" id="P0C7V8"/>
<dbReference type="BioGRID" id="131438">
    <property type="interactions" value="25"/>
</dbReference>
<dbReference type="FunCoup" id="P0C7V8">
    <property type="interactions" value="40"/>
</dbReference>
<dbReference type="IntAct" id="P0C7V8">
    <property type="interactions" value="17"/>
</dbReference>
<dbReference type="STRING" id="9606.ENSP00000462745"/>
<dbReference type="iPTMnet" id="P0C7V8"/>
<dbReference type="PhosphoSitePlus" id="P0C7V8"/>
<dbReference type="BioMuta" id="DCAF8L2"/>
<dbReference type="DMDM" id="519668665"/>
<dbReference type="jPOST" id="P0C7V8"/>
<dbReference type="MassIVE" id="P0C7V8"/>
<dbReference type="PaxDb" id="9606-ENSP00000462745"/>
<dbReference type="PeptideAtlas" id="P0C7V8"/>
<dbReference type="ProteomicsDB" id="52378"/>
<dbReference type="Pumba" id="P0C7V8"/>
<dbReference type="Antibodypedia" id="66936">
    <property type="antibodies" value="62 antibodies from 12 providers"/>
</dbReference>
<dbReference type="Ensembl" id="ENST00000451261.7">
    <property type="protein sequence ID" value="ENSP00000462745.1"/>
    <property type="gene ID" value="ENSG00000189186.11"/>
</dbReference>
<dbReference type="Ensembl" id="ENST00000545306.2">
    <property type="protein sequence ID" value="ENSP00000479800.1"/>
    <property type="gene ID" value="ENSG00000189186.11"/>
</dbReference>
<dbReference type="GeneID" id="347442"/>
<dbReference type="MANE-Select" id="ENST00000451261.7">
    <property type="protein sequence ID" value="ENSP00000462745.1"/>
    <property type="RefSeq nucleotide sequence ID" value="NM_001353450.2"/>
    <property type="RefSeq protein sequence ID" value="NP_001340379.1"/>
</dbReference>
<dbReference type="UCSC" id="uc011mjy.2">
    <property type="organism name" value="human"/>
</dbReference>
<dbReference type="AGR" id="HGNC:31811"/>
<dbReference type="GeneCards" id="DCAF8L2"/>
<dbReference type="HGNC" id="HGNC:31811">
    <property type="gene designation" value="DCAF8L2"/>
</dbReference>
<dbReference type="HPA" id="ENSG00000189186">
    <property type="expression patterns" value="Tissue enriched (testis)"/>
</dbReference>
<dbReference type="neXtProt" id="NX_P0C7V8"/>
<dbReference type="OpenTargets" id="ENSG00000189186"/>
<dbReference type="VEuPathDB" id="HostDB:ENSG00000189186"/>
<dbReference type="eggNOG" id="KOG1334">
    <property type="taxonomic scope" value="Eukaryota"/>
</dbReference>
<dbReference type="GeneTree" id="ENSGT00950000182900"/>
<dbReference type="HOGENOM" id="CLU_012381_4_1_1"/>
<dbReference type="InParanoid" id="P0C7V8"/>
<dbReference type="OMA" id="FASGHKN"/>
<dbReference type="OrthoDB" id="4869960at2759"/>
<dbReference type="PAN-GO" id="P0C7V8">
    <property type="GO annotations" value="2 GO annotations based on evolutionary models"/>
</dbReference>
<dbReference type="PhylomeDB" id="P0C7V8"/>
<dbReference type="TreeFam" id="TF326071"/>
<dbReference type="PathwayCommons" id="P0C7V8"/>
<dbReference type="SignaLink" id="P0C7V8"/>
<dbReference type="BioGRID-ORCS" id="347442">
    <property type="hits" value="13 hits in 809 CRISPR screens"/>
</dbReference>
<dbReference type="ChiTaRS" id="DCAF8L2">
    <property type="organism name" value="human"/>
</dbReference>
<dbReference type="GenomeRNAi" id="347442"/>
<dbReference type="Pharos" id="P0C7V8">
    <property type="development level" value="Tdark"/>
</dbReference>
<dbReference type="PRO" id="PR:P0C7V8"/>
<dbReference type="Proteomes" id="UP000005640">
    <property type="component" value="Chromosome X"/>
</dbReference>
<dbReference type="RNAct" id="P0C7V8">
    <property type="molecule type" value="protein"/>
</dbReference>
<dbReference type="Bgee" id="ENSG00000189186">
    <property type="expression patterns" value="Expressed in right testis and 21 other cell types or tissues"/>
</dbReference>
<dbReference type="ExpressionAtlas" id="P0C7V8">
    <property type="expression patterns" value="baseline and differential"/>
</dbReference>
<dbReference type="GO" id="GO:0080008">
    <property type="term" value="C:Cul4-RING E3 ubiquitin ligase complex"/>
    <property type="evidence" value="ECO:0000318"/>
    <property type="project" value="GO_Central"/>
</dbReference>
<dbReference type="GO" id="GO:0005737">
    <property type="term" value="C:cytoplasm"/>
    <property type="evidence" value="ECO:0000318"/>
    <property type="project" value="GO_Central"/>
</dbReference>
<dbReference type="FunFam" id="2.130.10.10:FF:000144">
    <property type="entry name" value="DDB1- and CUL4-associated factor 8"/>
    <property type="match status" value="1"/>
</dbReference>
<dbReference type="Gene3D" id="2.130.10.10">
    <property type="entry name" value="YVTN repeat-like/Quinoprotein amine dehydrogenase"/>
    <property type="match status" value="1"/>
</dbReference>
<dbReference type="InterPro" id="IPR045151">
    <property type="entry name" value="DCAF8"/>
</dbReference>
<dbReference type="InterPro" id="IPR015943">
    <property type="entry name" value="WD40/YVTN_repeat-like_dom_sf"/>
</dbReference>
<dbReference type="InterPro" id="IPR036322">
    <property type="entry name" value="WD40_repeat_dom_sf"/>
</dbReference>
<dbReference type="InterPro" id="IPR001680">
    <property type="entry name" value="WD40_rpt"/>
</dbReference>
<dbReference type="PANTHER" id="PTHR15574:SF42">
    <property type="entry name" value="DDB1- AND CUL4-ASSOCIATED FACTOR 8-LIKE PROTEIN 2"/>
    <property type="match status" value="1"/>
</dbReference>
<dbReference type="PANTHER" id="PTHR15574">
    <property type="entry name" value="WD REPEAT DOMAIN-CONTAINING FAMILY"/>
    <property type="match status" value="1"/>
</dbReference>
<dbReference type="Pfam" id="PF00400">
    <property type="entry name" value="WD40"/>
    <property type="match status" value="3"/>
</dbReference>
<dbReference type="SMART" id="SM00320">
    <property type="entry name" value="WD40"/>
    <property type="match status" value="7"/>
</dbReference>
<dbReference type="SUPFAM" id="SSF50978">
    <property type="entry name" value="WD40 repeat-like"/>
    <property type="match status" value="1"/>
</dbReference>
<dbReference type="PROSITE" id="PS50082">
    <property type="entry name" value="WD_REPEATS_2"/>
    <property type="match status" value="1"/>
</dbReference>
<dbReference type="PROSITE" id="PS50294">
    <property type="entry name" value="WD_REPEATS_REGION"/>
    <property type="match status" value="1"/>
</dbReference>
<proteinExistence type="evidence at protein level"/>